<organism>
    <name type="scientific">Frog virus 3 (isolate Goorha)</name>
    <name type="common">FV-3</name>
    <dbReference type="NCBI Taxonomy" id="654924"/>
    <lineage>
        <taxon>Viruses</taxon>
        <taxon>Varidnaviria</taxon>
        <taxon>Bamfordvirae</taxon>
        <taxon>Nucleocytoviricota</taxon>
        <taxon>Megaviricetes</taxon>
        <taxon>Pimascovirales</taxon>
        <taxon>Iridoviridae</taxon>
        <taxon>Alphairidovirinae</taxon>
        <taxon>Ranavirus</taxon>
        <taxon>Frog virus 3</taxon>
    </lineage>
</organism>
<accession>Q6GZS7</accession>
<keyword id="KW-1185">Reference proteome</keyword>
<protein>
    <recommendedName>
        <fullName>Putative SAP domain-containing protein 049L</fullName>
    </recommendedName>
</protein>
<name>049L_FRG3G</name>
<sequence length="249" mass="27466">MAAPKAEGEDKPKRVRKSRAKPKPETKEVKKPKSKEFCTADDSSDDYNEVKPSPAMIALMAVKEIPESEDVPDKSDSEAEAPVPAIVKKRRTPPKKAESSDDKKLDEATGEQVIDEDALSKLTIQTLKGMCKTRNLKISGNKAALVQRLIEADGIAHIIPTTATVVQKVKKTKRPAVFSKVDSELKLIPCPGREHMLMDEATGLVFLDEDPSTAVGFIEHGEVFGLDSEHMTVCKNMGIRYSWTEDYLC</sequence>
<gene>
    <name type="ORF">FV3-049L</name>
</gene>
<dbReference type="EMBL" id="AY548484">
    <property type="protein sequence ID" value="AAT09708.1"/>
    <property type="molecule type" value="Genomic_DNA"/>
</dbReference>
<dbReference type="RefSeq" id="YP_031627.1">
    <property type="nucleotide sequence ID" value="NC_005946.1"/>
</dbReference>
<dbReference type="KEGG" id="vg:2947828"/>
<dbReference type="Proteomes" id="UP000008770">
    <property type="component" value="Segment"/>
</dbReference>
<dbReference type="Gene3D" id="1.10.720.30">
    <property type="entry name" value="SAP domain"/>
    <property type="match status" value="1"/>
</dbReference>
<dbReference type="InterPro" id="IPR003034">
    <property type="entry name" value="SAP_dom"/>
</dbReference>
<dbReference type="InterPro" id="IPR036361">
    <property type="entry name" value="SAP_dom_sf"/>
</dbReference>
<dbReference type="Pfam" id="PF02037">
    <property type="entry name" value="SAP"/>
    <property type="match status" value="1"/>
</dbReference>
<dbReference type="SMART" id="SM00513">
    <property type="entry name" value="SAP"/>
    <property type="match status" value="1"/>
</dbReference>
<dbReference type="SUPFAM" id="SSF68906">
    <property type="entry name" value="SAP domain"/>
    <property type="match status" value="1"/>
</dbReference>
<dbReference type="PROSITE" id="PS50800">
    <property type="entry name" value="SAP"/>
    <property type="match status" value="1"/>
</dbReference>
<evidence type="ECO:0000255" key="1">
    <source>
        <dbReference type="PROSITE-ProRule" id="PRU00186"/>
    </source>
</evidence>
<evidence type="ECO:0000256" key="2">
    <source>
        <dbReference type="SAM" id="MobiDB-lite"/>
    </source>
</evidence>
<reference key="1">
    <citation type="journal article" date="2004" name="Virology">
        <title>Comparative genomic analyses of frog virus 3, type species of the genus Ranavirus (family Iridoviridae).</title>
        <authorList>
            <person name="Tan W.G."/>
            <person name="Barkman T.J."/>
            <person name="Gregory Chinchar V."/>
            <person name="Essani K."/>
        </authorList>
    </citation>
    <scope>NUCLEOTIDE SEQUENCE [LARGE SCALE GENOMIC DNA]</scope>
</reference>
<proteinExistence type="predicted"/>
<organismHost>
    <name type="scientific">Dryophytes versicolor</name>
    <name type="common">chameleon treefrog</name>
    <dbReference type="NCBI Taxonomy" id="30343"/>
</organismHost>
<organismHost>
    <name type="scientific">Lithobates pipiens</name>
    <name type="common">Northern leopard frog</name>
    <name type="synonym">Rana pipiens</name>
    <dbReference type="NCBI Taxonomy" id="8404"/>
</organismHost>
<organismHost>
    <name type="scientific">Lithobates sylvaticus</name>
    <name type="common">Wood frog</name>
    <name type="synonym">Rana sylvatica</name>
    <dbReference type="NCBI Taxonomy" id="45438"/>
</organismHost>
<organismHost>
    <name type="scientific">Notophthalmus viridescens</name>
    <name type="common">Eastern newt</name>
    <name type="synonym">Triturus viridescens</name>
    <dbReference type="NCBI Taxonomy" id="8316"/>
</organismHost>
<feature type="chain" id="PRO_0000410583" description="Putative SAP domain-containing protein 049L">
    <location>
        <begin position="1"/>
        <end position="249"/>
    </location>
</feature>
<feature type="domain" description="SAP" evidence="1">
    <location>
        <begin position="119"/>
        <end position="153"/>
    </location>
</feature>
<feature type="region of interest" description="Disordered" evidence="2">
    <location>
        <begin position="1"/>
        <end position="110"/>
    </location>
</feature>
<feature type="compositionally biased region" description="Basic and acidic residues" evidence="2">
    <location>
        <begin position="1"/>
        <end position="12"/>
    </location>
</feature>
<feature type="compositionally biased region" description="Basic and acidic residues" evidence="2">
    <location>
        <begin position="22"/>
        <end position="38"/>
    </location>
</feature>
<feature type="compositionally biased region" description="Basic and acidic residues" evidence="2">
    <location>
        <begin position="95"/>
        <end position="107"/>
    </location>
</feature>